<feature type="chain" id="PRO_0000228234" description="Translation initiation factor IF-2">
    <location>
        <begin position="1"/>
        <end position="966"/>
    </location>
</feature>
<feature type="domain" description="tr-type G">
    <location>
        <begin position="466"/>
        <end position="635"/>
    </location>
</feature>
<feature type="region of interest" description="Disordered" evidence="3">
    <location>
        <begin position="99"/>
        <end position="382"/>
    </location>
</feature>
<feature type="region of interest" description="G1" evidence="1">
    <location>
        <begin position="475"/>
        <end position="482"/>
    </location>
</feature>
<feature type="region of interest" description="G2" evidence="1">
    <location>
        <begin position="500"/>
        <end position="504"/>
    </location>
</feature>
<feature type="region of interest" description="G3" evidence="1">
    <location>
        <begin position="521"/>
        <end position="524"/>
    </location>
</feature>
<feature type="region of interest" description="G4" evidence="1">
    <location>
        <begin position="575"/>
        <end position="578"/>
    </location>
</feature>
<feature type="region of interest" description="G5" evidence="1">
    <location>
        <begin position="611"/>
        <end position="613"/>
    </location>
</feature>
<feature type="compositionally biased region" description="Basic and acidic residues" evidence="3">
    <location>
        <begin position="99"/>
        <end position="113"/>
    </location>
</feature>
<feature type="compositionally biased region" description="Basic and acidic residues" evidence="3">
    <location>
        <begin position="123"/>
        <end position="183"/>
    </location>
</feature>
<feature type="compositionally biased region" description="Basic and acidic residues" evidence="3">
    <location>
        <begin position="197"/>
        <end position="212"/>
    </location>
</feature>
<feature type="compositionally biased region" description="Basic and acidic residues" evidence="3">
    <location>
        <begin position="220"/>
        <end position="249"/>
    </location>
</feature>
<feature type="compositionally biased region" description="Basic and acidic residues" evidence="3">
    <location>
        <begin position="266"/>
        <end position="277"/>
    </location>
</feature>
<feature type="compositionally biased region" description="Low complexity" evidence="3">
    <location>
        <begin position="304"/>
        <end position="315"/>
    </location>
</feature>
<feature type="compositionally biased region" description="Gly residues" evidence="3">
    <location>
        <begin position="346"/>
        <end position="359"/>
    </location>
</feature>
<feature type="binding site" evidence="2">
    <location>
        <begin position="475"/>
        <end position="482"/>
    </location>
    <ligand>
        <name>GTP</name>
        <dbReference type="ChEBI" id="CHEBI:37565"/>
    </ligand>
</feature>
<feature type="binding site" evidence="2">
    <location>
        <begin position="521"/>
        <end position="525"/>
    </location>
    <ligand>
        <name>GTP</name>
        <dbReference type="ChEBI" id="CHEBI:37565"/>
    </ligand>
</feature>
<feature type="binding site" evidence="2">
    <location>
        <begin position="575"/>
        <end position="578"/>
    </location>
    <ligand>
        <name>GTP</name>
        <dbReference type="ChEBI" id="CHEBI:37565"/>
    </ligand>
</feature>
<name>IF2_CUPPJ</name>
<organism>
    <name type="scientific">Cupriavidus pinatubonensis (strain JMP 134 / LMG 1197)</name>
    <name type="common">Cupriavidus necator (strain JMP 134)</name>
    <dbReference type="NCBI Taxonomy" id="264198"/>
    <lineage>
        <taxon>Bacteria</taxon>
        <taxon>Pseudomonadati</taxon>
        <taxon>Pseudomonadota</taxon>
        <taxon>Betaproteobacteria</taxon>
        <taxon>Burkholderiales</taxon>
        <taxon>Burkholderiaceae</taxon>
        <taxon>Cupriavidus</taxon>
    </lineage>
</organism>
<proteinExistence type="inferred from homology"/>
<evidence type="ECO:0000250" key="1"/>
<evidence type="ECO:0000255" key="2">
    <source>
        <dbReference type="HAMAP-Rule" id="MF_00100"/>
    </source>
</evidence>
<evidence type="ECO:0000256" key="3">
    <source>
        <dbReference type="SAM" id="MobiDB-lite"/>
    </source>
</evidence>
<sequence>MASTTVAQLAAELSRSAAALLEQLQAAGLGKATPEDIVTESDKTRLLDYLKRSHGQADDSARKKITLTKRETSEIRQADSTGKTRTVQVEVRKKRVLIKRDEAGADQHNEAADQHALAAEAAEQARREEEERQQAAELARQEAEAKARREAAEREEAERRAKQEALEAEQRRQAELLARKAEEEAAAARAVGEAAEDASRKKAEDEQARVAVERAAAQKAADDAKAAADKARAEQDAARKRREAAEAEARAIQQMLNAPARVLKAPSERKAEEKKAEQTGTLHKPVKPASATATEAKAGDKKPAATTTTTTATTTADKKGKTGKPGSWQDDSSRKKGSGLKTRGDSSGGVGGWRGGPRGRGGRQQHADDGRSNFQAPTEPVVREVHVPETISVADLAHKMAVKASEVIKQMMKLGQMVTINQVLDQETAMIVVEEMGHKAFAAKLDDPEALLVVDGEEHTDAEQLPRPPVVTVMGHVDHGKTSLLDYIRRAKVAAGEAGGITQHIGAYHVETERGVITFLDTPGHEAFTAMRARGAKATDIVILVVAADDGVMPQTKEAIAHAKAAGVPIVVAINKIDKPDANPDRVKQELVAEQVLPEEYGGDSPFVPVSAKTGAGIEDLLEQVLLQAEVLELKAPVDAPAKGLVVEAQLDKGKGPIATILVSSGTLKRGDVVLAGSAYGRVRAMLDENGKPTKEAGPSIPVEIQGLSEVPAAGEEVLVLPDERKAREIALFRQGKFRDVKLAKQQAAKLETMLEQMTEGDVQTLPLIVKADVQGSQEALVQSLQKLSTAEVRVQIVHAGVGAISESDVNLATASKAVIIGFNVRADAGARKLAENHGIDIRYYNIIYDAVDEIKAAMSGMLAPEKRETTIGQVEVRQVFRVPKIGAVAGCMVTDGLVKRNSLVRVLRNNVVVHTGELDSLKRFKDDVKEVKQGFECGLSIKNFNDVQEGDQLEVYEITEVARTL</sequence>
<accession>Q46ZP1</accession>
<gene>
    <name evidence="2" type="primary">infB</name>
    <name type="ordered locus">Reut_A2028</name>
</gene>
<dbReference type="EMBL" id="CP000090">
    <property type="protein sequence ID" value="AAZ61392.1"/>
    <property type="molecule type" value="Genomic_DNA"/>
</dbReference>
<dbReference type="SMR" id="Q46ZP1"/>
<dbReference type="STRING" id="264198.Reut_A2028"/>
<dbReference type="KEGG" id="reu:Reut_A2028"/>
<dbReference type="eggNOG" id="COG0532">
    <property type="taxonomic scope" value="Bacteria"/>
</dbReference>
<dbReference type="HOGENOM" id="CLU_006301_6_0_4"/>
<dbReference type="OrthoDB" id="9811804at2"/>
<dbReference type="GO" id="GO:0005829">
    <property type="term" value="C:cytosol"/>
    <property type="evidence" value="ECO:0007669"/>
    <property type="project" value="TreeGrafter"/>
</dbReference>
<dbReference type="GO" id="GO:0005525">
    <property type="term" value="F:GTP binding"/>
    <property type="evidence" value="ECO:0007669"/>
    <property type="project" value="UniProtKB-KW"/>
</dbReference>
<dbReference type="GO" id="GO:0003924">
    <property type="term" value="F:GTPase activity"/>
    <property type="evidence" value="ECO:0007669"/>
    <property type="project" value="UniProtKB-UniRule"/>
</dbReference>
<dbReference type="GO" id="GO:0097216">
    <property type="term" value="F:guanosine tetraphosphate binding"/>
    <property type="evidence" value="ECO:0007669"/>
    <property type="project" value="UniProtKB-ARBA"/>
</dbReference>
<dbReference type="GO" id="GO:0003743">
    <property type="term" value="F:translation initiation factor activity"/>
    <property type="evidence" value="ECO:0007669"/>
    <property type="project" value="UniProtKB-UniRule"/>
</dbReference>
<dbReference type="CDD" id="cd01887">
    <property type="entry name" value="IF2_eIF5B"/>
    <property type="match status" value="1"/>
</dbReference>
<dbReference type="CDD" id="cd03702">
    <property type="entry name" value="IF2_mtIF2_II"/>
    <property type="match status" value="1"/>
</dbReference>
<dbReference type="CDD" id="cd03692">
    <property type="entry name" value="mtIF2_IVc"/>
    <property type="match status" value="1"/>
</dbReference>
<dbReference type="FunFam" id="2.40.30.10:FF:000007">
    <property type="entry name" value="Translation initiation factor IF-2"/>
    <property type="match status" value="1"/>
</dbReference>
<dbReference type="FunFam" id="2.40.30.10:FF:000008">
    <property type="entry name" value="Translation initiation factor IF-2"/>
    <property type="match status" value="1"/>
</dbReference>
<dbReference type="FunFam" id="3.40.50.10050:FF:000001">
    <property type="entry name" value="Translation initiation factor IF-2"/>
    <property type="match status" value="1"/>
</dbReference>
<dbReference type="FunFam" id="3.40.50.300:FF:000019">
    <property type="entry name" value="Translation initiation factor IF-2"/>
    <property type="match status" value="1"/>
</dbReference>
<dbReference type="Gene3D" id="3.40.50.300">
    <property type="entry name" value="P-loop containing nucleotide triphosphate hydrolases"/>
    <property type="match status" value="1"/>
</dbReference>
<dbReference type="Gene3D" id="3.30.56.50">
    <property type="entry name" value="Putative DNA-binding domain, N-terminal subdomain of bacterial translation initiation factor IF2"/>
    <property type="match status" value="1"/>
</dbReference>
<dbReference type="Gene3D" id="2.40.30.10">
    <property type="entry name" value="Translation factors"/>
    <property type="match status" value="2"/>
</dbReference>
<dbReference type="Gene3D" id="3.40.50.10050">
    <property type="entry name" value="Translation initiation factor IF- 2, domain 3"/>
    <property type="match status" value="1"/>
</dbReference>
<dbReference type="HAMAP" id="MF_00100_B">
    <property type="entry name" value="IF_2_B"/>
    <property type="match status" value="1"/>
</dbReference>
<dbReference type="InterPro" id="IPR009061">
    <property type="entry name" value="DNA-bd_dom_put_sf"/>
</dbReference>
<dbReference type="InterPro" id="IPR053905">
    <property type="entry name" value="EF-G-like_DII"/>
</dbReference>
<dbReference type="InterPro" id="IPR004161">
    <property type="entry name" value="EFTu-like_2"/>
</dbReference>
<dbReference type="InterPro" id="IPR013575">
    <property type="entry name" value="IF2_assoc_dom_bac"/>
</dbReference>
<dbReference type="InterPro" id="IPR044145">
    <property type="entry name" value="IF2_II"/>
</dbReference>
<dbReference type="InterPro" id="IPR006847">
    <property type="entry name" value="IF2_N"/>
</dbReference>
<dbReference type="InterPro" id="IPR027417">
    <property type="entry name" value="P-loop_NTPase"/>
</dbReference>
<dbReference type="InterPro" id="IPR005225">
    <property type="entry name" value="Small_GTP-bd"/>
</dbReference>
<dbReference type="InterPro" id="IPR000795">
    <property type="entry name" value="T_Tr_GTP-bd_dom"/>
</dbReference>
<dbReference type="InterPro" id="IPR000178">
    <property type="entry name" value="TF_IF2_bacterial-like"/>
</dbReference>
<dbReference type="InterPro" id="IPR015760">
    <property type="entry name" value="TIF_IF2"/>
</dbReference>
<dbReference type="InterPro" id="IPR023115">
    <property type="entry name" value="TIF_IF2_dom3"/>
</dbReference>
<dbReference type="InterPro" id="IPR036925">
    <property type="entry name" value="TIF_IF2_dom3_sf"/>
</dbReference>
<dbReference type="InterPro" id="IPR009000">
    <property type="entry name" value="Transl_B-barrel_sf"/>
</dbReference>
<dbReference type="NCBIfam" id="TIGR00487">
    <property type="entry name" value="IF-2"/>
    <property type="match status" value="1"/>
</dbReference>
<dbReference type="NCBIfam" id="TIGR00231">
    <property type="entry name" value="small_GTP"/>
    <property type="match status" value="1"/>
</dbReference>
<dbReference type="PANTHER" id="PTHR43381:SF5">
    <property type="entry name" value="TR-TYPE G DOMAIN-CONTAINING PROTEIN"/>
    <property type="match status" value="1"/>
</dbReference>
<dbReference type="PANTHER" id="PTHR43381">
    <property type="entry name" value="TRANSLATION INITIATION FACTOR IF-2-RELATED"/>
    <property type="match status" value="1"/>
</dbReference>
<dbReference type="Pfam" id="PF22042">
    <property type="entry name" value="EF-G_D2"/>
    <property type="match status" value="1"/>
</dbReference>
<dbReference type="Pfam" id="PF00009">
    <property type="entry name" value="GTP_EFTU"/>
    <property type="match status" value="1"/>
</dbReference>
<dbReference type="Pfam" id="PF03144">
    <property type="entry name" value="GTP_EFTU_D2"/>
    <property type="match status" value="1"/>
</dbReference>
<dbReference type="Pfam" id="PF11987">
    <property type="entry name" value="IF-2"/>
    <property type="match status" value="1"/>
</dbReference>
<dbReference type="Pfam" id="PF08364">
    <property type="entry name" value="IF2_assoc"/>
    <property type="match status" value="1"/>
</dbReference>
<dbReference type="Pfam" id="PF04760">
    <property type="entry name" value="IF2_N"/>
    <property type="match status" value="2"/>
</dbReference>
<dbReference type="SUPFAM" id="SSF52156">
    <property type="entry name" value="Initiation factor IF2/eIF5b, domain 3"/>
    <property type="match status" value="1"/>
</dbReference>
<dbReference type="SUPFAM" id="SSF52540">
    <property type="entry name" value="P-loop containing nucleoside triphosphate hydrolases"/>
    <property type="match status" value="1"/>
</dbReference>
<dbReference type="SUPFAM" id="SSF46955">
    <property type="entry name" value="Putative DNA-binding domain"/>
    <property type="match status" value="1"/>
</dbReference>
<dbReference type="SUPFAM" id="SSF50447">
    <property type="entry name" value="Translation proteins"/>
    <property type="match status" value="2"/>
</dbReference>
<dbReference type="PROSITE" id="PS51722">
    <property type="entry name" value="G_TR_2"/>
    <property type="match status" value="1"/>
</dbReference>
<dbReference type="PROSITE" id="PS01176">
    <property type="entry name" value="IF2"/>
    <property type="match status" value="1"/>
</dbReference>
<comment type="function">
    <text evidence="2">One of the essential components for the initiation of protein synthesis. Protects formylmethionyl-tRNA from spontaneous hydrolysis and promotes its binding to the 30S ribosomal subunits. Also involved in the hydrolysis of GTP during the formation of the 70S ribosomal complex.</text>
</comment>
<comment type="subcellular location">
    <subcellularLocation>
        <location evidence="2">Cytoplasm</location>
    </subcellularLocation>
</comment>
<comment type="similarity">
    <text evidence="2">Belongs to the TRAFAC class translation factor GTPase superfamily. Classic translation factor GTPase family. IF-2 subfamily.</text>
</comment>
<reference key="1">
    <citation type="journal article" date="2010" name="PLoS ONE">
        <title>The complete multipartite genome sequence of Cupriavidus necator JMP134, a versatile pollutant degrader.</title>
        <authorList>
            <person name="Lykidis A."/>
            <person name="Perez-Pantoja D."/>
            <person name="Ledger T."/>
            <person name="Mavromatis K."/>
            <person name="Anderson I.J."/>
            <person name="Ivanova N.N."/>
            <person name="Hooper S.D."/>
            <person name="Lapidus A."/>
            <person name="Lucas S."/>
            <person name="Gonzalez B."/>
            <person name="Kyrpides N.C."/>
        </authorList>
    </citation>
    <scope>NUCLEOTIDE SEQUENCE [LARGE SCALE GENOMIC DNA]</scope>
    <source>
        <strain>JMP134 / LMG 1197</strain>
    </source>
</reference>
<protein>
    <recommendedName>
        <fullName evidence="2">Translation initiation factor IF-2</fullName>
    </recommendedName>
</protein>
<keyword id="KW-0963">Cytoplasm</keyword>
<keyword id="KW-0342">GTP-binding</keyword>
<keyword id="KW-0396">Initiation factor</keyword>
<keyword id="KW-0547">Nucleotide-binding</keyword>
<keyword id="KW-0648">Protein biosynthesis</keyword>